<keyword id="KW-0378">Hydrolase</keyword>
<keyword id="KW-0546">Nucleotide metabolism</keyword>
<keyword id="KW-0547">Nucleotide-binding</keyword>
<dbReference type="EC" id="3.5.4.13" evidence="1"/>
<dbReference type="EMBL" id="CP000458">
    <property type="protein sequence ID" value="ABK09183.1"/>
    <property type="molecule type" value="Genomic_DNA"/>
</dbReference>
<dbReference type="RefSeq" id="WP_006398615.1">
    <property type="nucleotide sequence ID" value="NC_008542.1"/>
</dbReference>
<dbReference type="SMR" id="A0K9K6"/>
<dbReference type="GeneID" id="98107731"/>
<dbReference type="KEGG" id="bch:Bcen2424_2433"/>
<dbReference type="HOGENOM" id="CLU_087476_4_0_4"/>
<dbReference type="UniPathway" id="UPA00610">
    <property type="reaction ID" value="UER00665"/>
</dbReference>
<dbReference type="GO" id="GO:0008829">
    <property type="term" value="F:dCTP deaminase activity"/>
    <property type="evidence" value="ECO:0007669"/>
    <property type="project" value="UniProtKB-UniRule"/>
</dbReference>
<dbReference type="GO" id="GO:0000166">
    <property type="term" value="F:nucleotide binding"/>
    <property type="evidence" value="ECO:0007669"/>
    <property type="project" value="UniProtKB-KW"/>
</dbReference>
<dbReference type="GO" id="GO:0006226">
    <property type="term" value="P:dUMP biosynthetic process"/>
    <property type="evidence" value="ECO:0007669"/>
    <property type="project" value="UniProtKB-UniPathway"/>
</dbReference>
<dbReference type="GO" id="GO:0006229">
    <property type="term" value="P:dUTP biosynthetic process"/>
    <property type="evidence" value="ECO:0007669"/>
    <property type="project" value="UniProtKB-UniRule"/>
</dbReference>
<dbReference type="GO" id="GO:0015949">
    <property type="term" value="P:nucleobase-containing small molecule interconversion"/>
    <property type="evidence" value="ECO:0007669"/>
    <property type="project" value="TreeGrafter"/>
</dbReference>
<dbReference type="CDD" id="cd07557">
    <property type="entry name" value="trimeric_dUTPase"/>
    <property type="match status" value="1"/>
</dbReference>
<dbReference type="FunFam" id="2.70.40.10:FF:000001">
    <property type="entry name" value="dCTP deaminase"/>
    <property type="match status" value="1"/>
</dbReference>
<dbReference type="Gene3D" id="2.70.40.10">
    <property type="match status" value="1"/>
</dbReference>
<dbReference type="HAMAP" id="MF_00146">
    <property type="entry name" value="dCTP_deaminase"/>
    <property type="match status" value="1"/>
</dbReference>
<dbReference type="InterPro" id="IPR011962">
    <property type="entry name" value="dCTP_deaminase"/>
</dbReference>
<dbReference type="InterPro" id="IPR036157">
    <property type="entry name" value="dUTPase-like_sf"/>
</dbReference>
<dbReference type="InterPro" id="IPR033704">
    <property type="entry name" value="dUTPase_trimeric"/>
</dbReference>
<dbReference type="NCBIfam" id="TIGR02274">
    <property type="entry name" value="dCTP_deam"/>
    <property type="match status" value="1"/>
</dbReference>
<dbReference type="PANTHER" id="PTHR42680">
    <property type="entry name" value="DCTP DEAMINASE"/>
    <property type="match status" value="1"/>
</dbReference>
<dbReference type="PANTHER" id="PTHR42680:SF3">
    <property type="entry name" value="DCTP DEAMINASE"/>
    <property type="match status" value="1"/>
</dbReference>
<dbReference type="Pfam" id="PF22769">
    <property type="entry name" value="DCD"/>
    <property type="match status" value="1"/>
</dbReference>
<dbReference type="SUPFAM" id="SSF51283">
    <property type="entry name" value="dUTPase-like"/>
    <property type="match status" value="1"/>
</dbReference>
<accession>A0K9K6</accession>
<protein>
    <recommendedName>
        <fullName evidence="1">dCTP deaminase</fullName>
        <ecNumber evidence="1">3.5.4.13</ecNumber>
    </recommendedName>
    <alternativeName>
        <fullName evidence="1">Deoxycytidine triphosphate deaminase</fullName>
    </alternativeName>
</protein>
<proteinExistence type="inferred from homology"/>
<comment type="function">
    <text evidence="1">Catalyzes the deamination of dCTP to dUTP.</text>
</comment>
<comment type="catalytic activity">
    <reaction evidence="1">
        <text>dCTP + H2O + H(+) = dUTP + NH4(+)</text>
        <dbReference type="Rhea" id="RHEA:22680"/>
        <dbReference type="ChEBI" id="CHEBI:15377"/>
        <dbReference type="ChEBI" id="CHEBI:15378"/>
        <dbReference type="ChEBI" id="CHEBI:28938"/>
        <dbReference type="ChEBI" id="CHEBI:61481"/>
        <dbReference type="ChEBI" id="CHEBI:61555"/>
        <dbReference type="EC" id="3.5.4.13"/>
    </reaction>
</comment>
<comment type="pathway">
    <text evidence="1">Pyrimidine metabolism; dUMP biosynthesis; dUMP from dCTP (dUTP route): step 1/2.</text>
</comment>
<comment type="subunit">
    <text evidence="1">Homotrimer.</text>
</comment>
<comment type="similarity">
    <text evidence="1">Belongs to the dCTP deaminase family.</text>
</comment>
<feature type="chain" id="PRO_1000009685" description="dCTP deaminase">
    <location>
        <begin position="1"/>
        <end position="189"/>
    </location>
</feature>
<feature type="active site" description="Proton donor/acceptor" evidence="1">
    <location>
        <position position="138"/>
    </location>
</feature>
<feature type="binding site" evidence="1">
    <location>
        <begin position="112"/>
        <end position="117"/>
    </location>
    <ligand>
        <name>dCTP</name>
        <dbReference type="ChEBI" id="CHEBI:61481"/>
    </ligand>
</feature>
<feature type="binding site" evidence="1">
    <location>
        <begin position="136"/>
        <end position="138"/>
    </location>
    <ligand>
        <name>dCTP</name>
        <dbReference type="ChEBI" id="CHEBI:61481"/>
    </ligand>
</feature>
<feature type="binding site" evidence="1">
    <location>
        <position position="157"/>
    </location>
    <ligand>
        <name>dCTP</name>
        <dbReference type="ChEBI" id="CHEBI:61481"/>
    </ligand>
</feature>
<feature type="binding site" evidence="1">
    <location>
        <position position="171"/>
    </location>
    <ligand>
        <name>dCTP</name>
        <dbReference type="ChEBI" id="CHEBI:61481"/>
    </ligand>
</feature>
<feature type="binding site" evidence="1">
    <location>
        <position position="181"/>
    </location>
    <ligand>
        <name>dCTP</name>
        <dbReference type="ChEBI" id="CHEBI:61481"/>
    </ligand>
</feature>
<evidence type="ECO:0000255" key="1">
    <source>
        <dbReference type="HAMAP-Rule" id="MF_00146"/>
    </source>
</evidence>
<sequence length="189" mass="21356">MSIKSDKWIRRMAEEHKMIEPFVPDQVRASEDGRRIVSYGTSSYGYDIRCADEFKIFTNINSTIVDPKNFDEGSFVDFKGDVCIIPPNSFALARTVEYFRIPRTVLTVCLGKSTYARCGIIVNVTPFEPEWEGYVTLEFSNTTPLPAKIYANEGVAQVLFFESDEVCDVSYADRGGKYQGQRGVTLPKT</sequence>
<gene>
    <name evidence="1" type="primary">dcd</name>
    <name type="ordered locus">Bcen2424_2433</name>
</gene>
<reference key="1">
    <citation type="submission" date="2006-08" db="EMBL/GenBank/DDBJ databases">
        <title>Complete sequence of chromosome 1 of Burkholderia cenocepacia HI2424.</title>
        <authorList>
            <person name="Copeland A."/>
            <person name="Lucas S."/>
            <person name="Lapidus A."/>
            <person name="Barry K."/>
            <person name="Detter J.C."/>
            <person name="Glavina del Rio T."/>
            <person name="Hammon N."/>
            <person name="Israni S."/>
            <person name="Pitluck S."/>
            <person name="Chain P."/>
            <person name="Malfatti S."/>
            <person name="Shin M."/>
            <person name="Vergez L."/>
            <person name="Schmutz J."/>
            <person name="Larimer F."/>
            <person name="Land M."/>
            <person name="Hauser L."/>
            <person name="Kyrpides N."/>
            <person name="Kim E."/>
            <person name="LiPuma J.J."/>
            <person name="Gonzalez C.F."/>
            <person name="Konstantinidis K."/>
            <person name="Tiedje J.M."/>
            <person name="Richardson P."/>
        </authorList>
    </citation>
    <scope>NUCLEOTIDE SEQUENCE [LARGE SCALE GENOMIC DNA]</scope>
    <source>
        <strain>HI2424</strain>
    </source>
</reference>
<name>DCD_BURCH</name>
<organism>
    <name type="scientific">Burkholderia cenocepacia (strain HI2424)</name>
    <dbReference type="NCBI Taxonomy" id="331272"/>
    <lineage>
        <taxon>Bacteria</taxon>
        <taxon>Pseudomonadati</taxon>
        <taxon>Pseudomonadota</taxon>
        <taxon>Betaproteobacteria</taxon>
        <taxon>Burkholderiales</taxon>
        <taxon>Burkholderiaceae</taxon>
        <taxon>Burkholderia</taxon>
        <taxon>Burkholderia cepacia complex</taxon>
    </lineage>
</organism>